<evidence type="ECO:0000255" key="1">
    <source>
        <dbReference type="HAMAP-Rule" id="MF_01005"/>
    </source>
</evidence>
<protein>
    <recommendedName>
        <fullName evidence="1">Vitamin B12 import ATP-binding protein BtuD</fullName>
        <ecNumber evidence="1">7.6.2.8</ecNumber>
    </recommendedName>
    <alternativeName>
        <fullName evidence="1">Vitamin B12-transporting ATPase</fullName>
    </alternativeName>
</protein>
<accession>B7M1B8</accession>
<proteinExistence type="inferred from homology"/>
<dbReference type="EC" id="7.6.2.8" evidence="1"/>
<dbReference type="EMBL" id="CU928160">
    <property type="protein sequence ID" value="CAQ98622.1"/>
    <property type="molecule type" value="Genomic_DNA"/>
</dbReference>
<dbReference type="RefSeq" id="WP_000029466.1">
    <property type="nucleotide sequence ID" value="NC_011741.1"/>
</dbReference>
<dbReference type="SMR" id="B7M1B8"/>
<dbReference type="GeneID" id="93775873"/>
<dbReference type="KEGG" id="ecr:ECIAI1_1765"/>
<dbReference type="HOGENOM" id="CLU_000604_1_11_6"/>
<dbReference type="GO" id="GO:0005886">
    <property type="term" value="C:plasma membrane"/>
    <property type="evidence" value="ECO:0007669"/>
    <property type="project" value="UniProtKB-SubCell"/>
</dbReference>
<dbReference type="GO" id="GO:0015420">
    <property type="term" value="F:ABC-type vitamin B12 transporter activity"/>
    <property type="evidence" value="ECO:0007669"/>
    <property type="project" value="UniProtKB-UniRule"/>
</dbReference>
<dbReference type="GO" id="GO:0005524">
    <property type="term" value="F:ATP binding"/>
    <property type="evidence" value="ECO:0007669"/>
    <property type="project" value="UniProtKB-KW"/>
</dbReference>
<dbReference type="GO" id="GO:0016887">
    <property type="term" value="F:ATP hydrolysis activity"/>
    <property type="evidence" value="ECO:0007669"/>
    <property type="project" value="InterPro"/>
</dbReference>
<dbReference type="CDD" id="cd03214">
    <property type="entry name" value="ABC_Iron-Siderophores_B12_Hemin"/>
    <property type="match status" value="1"/>
</dbReference>
<dbReference type="FunFam" id="3.40.50.300:FF:000462">
    <property type="entry name" value="Vitamin B12 import ATP-binding protein BtuD"/>
    <property type="match status" value="1"/>
</dbReference>
<dbReference type="Gene3D" id="3.40.50.300">
    <property type="entry name" value="P-loop containing nucleotide triphosphate hydrolases"/>
    <property type="match status" value="1"/>
</dbReference>
<dbReference type="HAMAP" id="MF_01005">
    <property type="entry name" value="BtuD"/>
    <property type="match status" value="1"/>
</dbReference>
<dbReference type="InterPro" id="IPR003593">
    <property type="entry name" value="AAA+_ATPase"/>
</dbReference>
<dbReference type="InterPro" id="IPR003439">
    <property type="entry name" value="ABC_transporter-like_ATP-bd"/>
</dbReference>
<dbReference type="InterPro" id="IPR017871">
    <property type="entry name" value="ABC_transporter-like_CS"/>
</dbReference>
<dbReference type="InterPro" id="IPR023693">
    <property type="entry name" value="ABC_transptr_BtuD"/>
</dbReference>
<dbReference type="InterPro" id="IPR050153">
    <property type="entry name" value="Metal_Ion_Import_ABC"/>
</dbReference>
<dbReference type="InterPro" id="IPR027417">
    <property type="entry name" value="P-loop_NTPase"/>
</dbReference>
<dbReference type="NCBIfam" id="NF002981">
    <property type="entry name" value="PRK03695.1"/>
    <property type="match status" value="1"/>
</dbReference>
<dbReference type="PANTHER" id="PTHR42734">
    <property type="entry name" value="METAL TRANSPORT SYSTEM ATP-BINDING PROTEIN TM_0124-RELATED"/>
    <property type="match status" value="1"/>
</dbReference>
<dbReference type="PANTHER" id="PTHR42734:SF18">
    <property type="entry name" value="VITAMIN B12 IMPORT ATP-BINDING PROTEIN BTUD"/>
    <property type="match status" value="1"/>
</dbReference>
<dbReference type="Pfam" id="PF00005">
    <property type="entry name" value="ABC_tran"/>
    <property type="match status" value="1"/>
</dbReference>
<dbReference type="SMART" id="SM00382">
    <property type="entry name" value="AAA"/>
    <property type="match status" value="1"/>
</dbReference>
<dbReference type="SUPFAM" id="SSF52540">
    <property type="entry name" value="P-loop containing nucleoside triphosphate hydrolases"/>
    <property type="match status" value="1"/>
</dbReference>
<dbReference type="PROSITE" id="PS00211">
    <property type="entry name" value="ABC_TRANSPORTER_1"/>
    <property type="match status" value="1"/>
</dbReference>
<dbReference type="PROSITE" id="PS50893">
    <property type="entry name" value="ABC_TRANSPORTER_2"/>
    <property type="match status" value="1"/>
</dbReference>
<comment type="function">
    <text evidence="1">Part of the ABC transporter complex BtuCDF involved in vitamin B12 import. Responsible for energy coupling to the transport system.</text>
</comment>
<comment type="catalytic activity">
    <reaction evidence="1">
        <text>an R-cob(III)alamin(out) + ATP + H2O = an R-cob(III)alamin(in) + ADP + phosphate + H(+)</text>
        <dbReference type="Rhea" id="RHEA:17873"/>
        <dbReference type="ChEBI" id="CHEBI:15377"/>
        <dbReference type="ChEBI" id="CHEBI:15378"/>
        <dbReference type="ChEBI" id="CHEBI:30616"/>
        <dbReference type="ChEBI" id="CHEBI:43474"/>
        <dbReference type="ChEBI" id="CHEBI:140785"/>
        <dbReference type="ChEBI" id="CHEBI:456216"/>
        <dbReference type="EC" id="7.6.2.8"/>
    </reaction>
</comment>
<comment type="subunit">
    <text evidence="1">The complex is composed of two ATP-binding proteins (BtuD), two transmembrane proteins (BtuC) and a solute-binding protein (BtuF).</text>
</comment>
<comment type="subcellular location">
    <subcellularLocation>
        <location evidence="1">Cell inner membrane</location>
        <topology evidence="1">Peripheral membrane protein</topology>
    </subcellularLocation>
</comment>
<comment type="similarity">
    <text evidence="1">Belongs to the ABC transporter superfamily. Vitamin B12 importer (TC 3.A.1.13.1) family.</text>
</comment>
<gene>
    <name evidence="1" type="primary">btuD</name>
    <name type="ordered locus">ECIAI1_1765</name>
</gene>
<sequence length="249" mass="27111">MSIVMQLQDVAESTRLGPLSGEVRAGEILHLVGPNGAGKSTLLARMAGMTSGKGSIQFAGQPLEAWSATKLALHRAYLSQQQTPPFAMPVWHYLTLHQHDKTRTELLNDVAGALALDDKLGRSTNQLSGGEWQRVRLAAVVLQITPQANPAGQLLLLDEPMNSLDVAQQSALDKILSALCQQGLAIVMSSHDLNHTLRHAHRAWLLKGGKMLASGRREEVLTPPNLAQAYGMNFRRLDIEGHRMLISTI</sequence>
<keyword id="KW-0067">ATP-binding</keyword>
<keyword id="KW-0997">Cell inner membrane</keyword>
<keyword id="KW-1003">Cell membrane</keyword>
<keyword id="KW-0472">Membrane</keyword>
<keyword id="KW-0547">Nucleotide-binding</keyword>
<keyword id="KW-1278">Translocase</keyword>
<keyword id="KW-0813">Transport</keyword>
<reference key="1">
    <citation type="journal article" date="2009" name="PLoS Genet.">
        <title>Organised genome dynamics in the Escherichia coli species results in highly diverse adaptive paths.</title>
        <authorList>
            <person name="Touchon M."/>
            <person name="Hoede C."/>
            <person name="Tenaillon O."/>
            <person name="Barbe V."/>
            <person name="Baeriswyl S."/>
            <person name="Bidet P."/>
            <person name="Bingen E."/>
            <person name="Bonacorsi S."/>
            <person name="Bouchier C."/>
            <person name="Bouvet O."/>
            <person name="Calteau A."/>
            <person name="Chiapello H."/>
            <person name="Clermont O."/>
            <person name="Cruveiller S."/>
            <person name="Danchin A."/>
            <person name="Diard M."/>
            <person name="Dossat C."/>
            <person name="Karoui M.E."/>
            <person name="Frapy E."/>
            <person name="Garry L."/>
            <person name="Ghigo J.M."/>
            <person name="Gilles A.M."/>
            <person name="Johnson J."/>
            <person name="Le Bouguenec C."/>
            <person name="Lescat M."/>
            <person name="Mangenot S."/>
            <person name="Martinez-Jehanne V."/>
            <person name="Matic I."/>
            <person name="Nassif X."/>
            <person name="Oztas S."/>
            <person name="Petit M.A."/>
            <person name="Pichon C."/>
            <person name="Rouy Z."/>
            <person name="Ruf C.S."/>
            <person name="Schneider D."/>
            <person name="Tourret J."/>
            <person name="Vacherie B."/>
            <person name="Vallenet D."/>
            <person name="Medigue C."/>
            <person name="Rocha E.P.C."/>
            <person name="Denamur E."/>
        </authorList>
    </citation>
    <scope>NUCLEOTIDE SEQUENCE [LARGE SCALE GENOMIC DNA]</scope>
    <source>
        <strain>IAI1</strain>
    </source>
</reference>
<organism>
    <name type="scientific">Escherichia coli O8 (strain IAI1)</name>
    <dbReference type="NCBI Taxonomy" id="585034"/>
    <lineage>
        <taxon>Bacteria</taxon>
        <taxon>Pseudomonadati</taxon>
        <taxon>Pseudomonadota</taxon>
        <taxon>Gammaproteobacteria</taxon>
        <taxon>Enterobacterales</taxon>
        <taxon>Enterobacteriaceae</taxon>
        <taxon>Escherichia</taxon>
    </lineage>
</organism>
<name>BTUD_ECO8A</name>
<feature type="chain" id="PRO_1000134661" description="Vitamin B12 import ATP-binding protein BtuD">
    <location>
        <begin position="1"/>
        <end position="249"/>
    </location>
</feature>
<feature type="domain" description="ABC transporter" evidence="1">
    <location>
        <begin position="1"/>
        <end position="233"/>
    </location>
</feature>
<feature type="binding site" evidence="1">
    <location>
        <begin position="33"/>
        <end position="40"/>
    </location>
    <ligand>
        <name>ATP</name>
        <dbReference type="ChEBI" id="CHEBI:30616"/>
    </ligand>
</feature>